<dbReference type="EC" id="1.1.1.31"/>
<dbReference type="EMBL" id="BC003914">
    <property type="protein sequence ID" value="AAH03914.1"/>
    <property type="molecule type" value="mRNA"/>
</dbReference>
<dbReference type="EMBL" id="AK078175">
    <property type="protein sequence ID" value="BAC37162.1"/>
    <property type="molecule type" value="mRNA"/>
</dbReference>
<dbReference type="CCDS" id="CCDS20151.1"/>
<dbReference type="RefSeq" id="NP_663542.1">
    <property type="nucleotide sequence ID" value="NM_145567.1"/>
</dbReference>
<dbReference type="SMR" id="Q99L13"/>
<dbReference type="BioGRID" id="208456">
    <property type="interactions" value="19"/>
</dbReference>
<dbReference type="FunCoup" id="Q99L13">
    <property type="interactions" value="2211"/>
</dbReference>
<dbReference type="IntAct" id="Q99L13">
    <property type="interactions" value="1"/>
</dbReference>
<dbReference type="STRING" id="10090.ENSMUSP00000031788"/>
<dbReference type="GlyGen" id="Q99L13">
    <property type="glycosylation" value="2 sites, 1 N-linked glycan (1 site), 1 O-linked glycan (1 site)"/>
</dbReference>
<dbReference type="iPTMnet" id="Q99L13"/>
<dbReference type="PhosphoSitePlus" id="Q99L13"/>
<dbReference type="SwissPalm" id="Q99L13"/>
<dbReference type="REPRODUCTION-2DPAGE" id="Q99L13"/>
<dbReference type="jPOST" id="Q99L13"/>
<dbReference type="PaxDb" id="10090-ENSMUSP00000031788"/>
<dbReference type="PeptideAtlas" id="Q99L13"/>
<dbReference type="ProteomicsDB" id="286030"/>
<dbReference type="Pumba" id="Q99L13"/>
<dbReference type="Antibodypedia" id="12430">
    <property type="antibodies" value="276 antibodies from 32 providers"/>
</dbReference>
<dbReference type="DNASU" id="58875"/>
<dbReference type="Ensembl" id="ENSMUST00000031788.9">
    <property type="protein sequence ID" value="ENSMUSP00000031788.9"/>
    <property type="gene ID" value="ENSMUSG00000029776.12"/>
</dbReference>
<dbReference type="GeneID" id="58875"/>
<dbReference type="KEGG" id="mmu:58875"/>
<dbReference type="UCSC" id="uc009byw.1">
    <property type="organism name" value="mouse"/>
</dbReference>
<dbReference type="AGR" id="MGI:1889802"/>
<dbReference type="CTD" id="11112"/>
<dbReference type="MGI" id="MGI:1889802">
    <property type="gene designation" value="Hibadh"/>
</dbReference>
<dbReference type="VEuPathDB" id="HostDB:ENSMUSG00000029776"/>
<dbReference type="eggNOG" id="KOG0409">
    <property type="taxonomic scope" value="Eukaryota"/>
</dbReference>
<dbReference type="GeneTree" id="ENSGT00940000155255"/>
<dbReference type="HOGENOM" id="CLU_035117_6_0_1"/>
<dbReference type="InParanoid" id="Q99L13"/>
<dbReference type="OMA" id="MGKKVWH"/>
<dbReference type="OrthoDB" id="435038at2759"/>
<dbReference type="PhylomeDB" id="Q99L13"/>
<dbReference type="TreeFam" id="TF314043"/>
<dbReference type="Reactome" id="R-MMU-70895">
    <property type="pathway name" value="Branched-chain amino acid catabolism"/>
</dbReference>
<dbReference type="UniPathway" id="UPA00362"/>
<dbReference type="BioGRID-ORCS" id="58875">
    <property type="hits" value="5 hits in 77 CRISPR screens"/>
</dbReference>
<dbReference type="ChiTaRS" id="Hibadh">
    <property type="organism name" value="mouse"/>
</dbReference>
<dbReference type="PRO" id="PR:Q99L13"/>
<dbReference type="Proteomes" id="UP000000589">
    <property type="component" value="Chromosome 6"/>
</dbReference>
<dbReference type="RNAct" id="Q99L13">
    <property type="molecule type" value="protein"/>
</dbReference>
<dbReference type="Bgee" id="ENSMUSG00000029776">
    <property type="expression patterns" value="Expressed in right kidney and 256 other cell types or tissues"/>
</dbReference>
<dbReference type="GO" id="GO:0005739">
    <property type="term" value="C:mitochondrion"/>
    <property type="evidence" value="ECO:0007005"/>
    <property type="project" value="MGI"/>
</dbReference>
<dbReference type="GO" id="GO:0008442">
    <property type="term" value="F:3-hydroxyisobutyrate dehydrogenase activity"/>
    <property type="evidence" value="ECO:0000250"/>
    <property type="project" value="UniProtKB"/>
</dbReference>
<dbReference type="GO" id="GO:0051287">
    <property type="term" value="F:NAD binding"/>
    <property type="evidence" value="ECO:0007669"/>
    <property type="project" value="InterPro"/>
</dbReference>
<dbReference type="GO" id="GO:0050661">
    <property type="term" value="F:NADP binding"/>
    <property type="evidence" value="ECO:0007669"/>
    <property type="project" value="InterPro"/>
</dbReference>
<dbReference type="GO" id="GO:0006574">
    <property type="term" value="P:valine catabolic process"/>
    <property type="evidence" value="ECO:0000250"/>
    <property type="project" value="UniProtKB"/>
</dbReference>
<dbReference type="FunFam" id="1.10.1040.10:FF:000006">
    <property type="entry name" value="3-hydroxyisobutyrate dehydrogenase"/>
    <property type="match status" value="1"/>
</dbReference>
<dbReference type="FunFam" id="3.40.50.720:FF:000119">
    <property type="entry name" value="3-hydroxyisobutyrate dehydrogenase"/>
    <property type="match status" value="1"/>
</dbReference>
<dbReference type="Gene3D" id="1.10.1040.10">
    <property type="entry name" value="N-(1-d-carboxylethyl)-l-norvaline Dehydrogenase, domain 2"/>
    <property type="match status" value="1"/>
</dbReference>
<dbReference type="Gene3D" id="3.40.50.720">
    <property type="entry name" value="NAD(P)-binding Rossmann-like Domain"/>
    <property type="match status" value="1"/>
</dbReference>
<dbReference type="InterPro" id="IPR002204">
    <property type="entry name" value="3-OH-isobutyrate_DH-rel_CS"/>
</dbReference>
<dbReference type="InterPro" id="IPR008927">
    <property type="entry name" value="6-PGluconate_DH-like_C_sf"/>
</dbReference>
<dbReference type="InterPro" id="IPR013328">
    <property type="entry name" value="6PGD_dom2"/>
</dbReference>
<dbReference type="InterPro" id="IPR006115">
    <property type="entry name" value="6PGDH_NADP-bd"/>
</dbReference>
<dbReference type="InterPro" id="IPR011548">
    <property type="entry name" value="HIBADH"/>
</dbReference>
<dbReference type="InterPro" id="IPR029154">
    <property type="entry name" value="HIBADH-like_NADP-bd"/>
</dbReference>
<dbReference type="InterPro" id="IPR015815">
    <property type="entry name" value="HIBADH-related"/>
</dbReference>
<dbReference type="InterPro" id="IPR036291">
    <property type="entry name" value="NAD(P)-bd_dom_sf"/>
</dbReference>
<dbReference type="NCBIfam" id="TIGR01692">
    <property type="entry name" value="HIBADH"/>
    <property type="match status" value="1"/>
</dbReference>
<dbReference type="PANTHER" id="PTHR22981:SF7">
    <property type="entry name" value="3-HYDROXYISOBUTYRATE DEHYDROGENASE, MITOCHONDRIAL"/>
    <property type="match status" value="1"/>
</dbReference>
<dbReference type="PANTHER" id="PTHR22981">
    <property type="entry name" value="3-HYDROXYISOBUTYRATE DEHYDROGENASE-RELATED"/>
    <property type="match status" value="1"/>
</dbReference>
<dbReference type="Pfam" id="PF14833">
    <property type="entry name" value="NAD_binding_11"/>
    <property type="match status" value="1"/>
</dbReference>
<dbReference type="Pfam" id="PF03446">
    <property type="entry name" value="NAD_binding_2"/>
    <property type="match status" value="1"/>
</dbReference>
<dbReference type="PIRSF" id="PIRSF000103">
    <property type="entry name" value="HIBADH"/>
    <property type="match status" value="1"/>
</dbReference>
<dbReference type="SUPFAM" id="SSF48179">
    <property type="entry name" value="6-phosphogluconate dehydrogenase C-terminal domain-like"/>
    <property type="match status" value="1"/>
</dbReference>
<dbReference type="SUPFAM" id="SSF51735">
    <property type="entry name" value="NAD(P)-binding Rossmann-fold domains"/>
    <property type="match status" value="1"/>
</dbReference>
<dbReference type="PROSITE" id="PS00895">
    <property type="entry name" value="3_HYDROXYISOBUT_DH"/>
    <property type="match status" value="1"/>
</dbReference>
<comment type="catalytic activity">
    <reaction>
        <text>3-hydroxy-2-methylpropanoate + NAD(+) = 2-methyl-3-oxopropanoate + NADH + H(+)</text>
        <dbReference type="Rhea" id="RHEA:17681"/>
        <dbReference type="ChEBI" id="CHEBI:11805"/>
        <dbReference type="ChEBI" id="CHEBI:15378"/>
        <dbReference type="ChEBI" id="CHEBI:57540"/>
        <dbReference type="ChEBI" id="CHEBI:57700"/>
        <dbReference type="ChEBI" id="CHEBI:57945"/>
        <dbReference type="EC" id="1.1.1.31"/>
    </reaction>
</comment>
<comment type="pathway">
    <text>Amino-acid degradation; L-valine degradation.</text>
</comment>
<comment type="subunit">
    <text evidence="1">Homodimer.</text>
</comment>
<comment type="subcellular location">
    <subcellularLocation>
        <location evidence="1">Mitochondrion</location>
    </subcellularLocation>
</comment>
<comment type="similarity">
    <text evidence="2">Belongs to the HIBADH-related family. 3-hydroxyisobutyrate dehydrogenase subfamily.</text>
</comment>
<accession>Q99L13</accession>
<accession>Q8BJY2</accession>
<sequence>MAASLGFRGAASGLWYWSGRRRPVGSLAAVCSRSMASKTPVGFIGLGNMGNPMAKNLMKHGYPLILYDVFPDVCKEFKEAGEQVASSPAEVAEKADRIITMLPSSMNAVEVYSGANGILKKVKKGSLLIDSSTIDPSVSKELAKEVEKMGAVFMDAPVSGGVGAARSGNLTFMVGGVEDEFAAAQELLECMGSNVVYCGAVGTGQSAKICNNMLLAISMIGTAEAMNLGIRSGLDPKLLAKILNMSSGRCWSSDTYNPVPGVMHGVPSSNNYQGGFGTTLMAKDLGLAQDSATSTKTPILLGSLAHQIYRMMCSKGYSKKDFSSVFQYLREEEPF</sequence>
<feature type="transit peptide" description="Mitochondrion" evidence="1">
    <location>
        <begin position="1"/>
        <end position="35"/>
    </location>
</feature>
<feature type="chain" id="PRO_0000007159" description="3-hydroxyisobutyrate dehydrogenase, mitochondrial">
    <location>
        <begin position="36"/>
        <end position="335"/>
    </location>
</feature>
<feature type="active site" evidence="1">
    <location>
        <position position="208"/>
    </location>
</feature>
<feature type="binding site" evidence="1">
    <location>
        <begin position="39"/>
        <end position="68"/>
    </location>
    <ligand>
        <name>NAD(+)</name>
        <dbReference type="ChEBI" id="CHEBI:57540"/>
    </ligand>
</feature>
<feature type="binding site" evidence="1">
    <location>
        <begin position="102"/>
        <end position="103"/>
    </location>
    <ligand>
        <name>NAD(+)</name>
        <dbReference type="ChEBI" id="CHEBI:57540"/>
    </ligand>
</feature>
<feature type="binding site" evidence="1">
    <location>
        <position position="107"/>
    </location>
    <ligand>
        <name>NAD(+)</name>
        <dbReference type="ChEBI" id="CHEBI:57540"/>
    </ligand>
</feature>
<feature type="binding site" evidence="1">
    <location>
        <position position="133"/>
    </location>
    <ligand>
        <name>NAD(+)</name>
        <dbReference type="ChEBI" id="CHEBI:57540"/>
    </ligand>
</feature>
<feature type="binding site" evidence="1">
    <location>
        <position position="283"/>
    </location>
    <ligand>
        <name>NAD(+)</name>
        <dbReference type="ChEBI" id="CHEBI:57540"/>
    </ligand>
</feature>
<feature type="modified residue" description="N6-acetyllysine; alternate" evidence="3">
    <location>
        <position position="59"/>
    </location>
</feature>
<feature type="modified residue" description="N6-succinyllysine; alternate" evidence="4">
    <location>
        <position position="59"/>
    </location>
</feature>
<feature type="modified residue" description="N6-acetyllysine; alternate" evidence="3">
    <location>
        <position position="75"/>
    </location>
</feature>
<feature type="modified residue" description="N6-succinyllysine; alternate" evidence="4">
    <location>
        <position position="75"/>
    </location>
</feature>
<feature type="modified residue" description="N6-acetyllysine; alternate" evidence="3">
    <location>
        <position position="78"/>
    </location>
</feature>
<feature type="modified residue" description="N6-succinyllysine; alternate" evidence="4">
    <location>
        <position position="78"/>
    </location>
</feature>
<feature type="modified residue" description="N6-succinyllysine" evidence="4">
    <location>
        <position position="94"/>
    </location>
</feature>
<feature type="modified residue" description="N6-acetyllysine" evidence="3">
    <location>
        <position position="120"/>
    </location>
</feature>
<feature type="modified residue" description="N6-succinyllysine" evidence="4">
    <location>
        <position position="140"/>
    </location>
</feature>
<feature type="modified residue" description="N6-acetyllysine" evidence="3">
    <location>
        <position position="144"/>
    </location>
</feature>
<feature type="modified residue" description="N6-acetyllysine; alternate" evidence="3">
    <location>
        <position position="148"/>
    </location>
</feature>
<feature type="modified residue" description="N6-succinyllysine; alternate" evidence="4">
    <location>
        <position position="148"/>
    </location>
</feature>
<feature type="modified residue" description="N6-acetyllysine; alternate" evidence="3">
    <location>
        <position position="237"/>
    </location>
</feature>
<feature type="modified residue" description="N6-succinyllysine; alternate" evidence="4">
    <location>
        <position position="237"/>
    </location>
</feature>
<feature type="modified residue" description="N6-acetyllysine; alternate" evidence="3">
    <location>
        <position position="241"/>
    </location>
</feature>
<feature type="modified residue" description="N6-succinyllysine; alternate" evidence="4">
    <location>
        <position position="241"/>
    </location>
</feature>
<feature type="modified residue" description="N6-succinyllysine" evidence="4">
    <location>
        <position position="296"/>
    </location>
</feature>
<feature type="modified residue" description="N6-acetyllysine; alternate" evidence="3">
    <location>
        <position position="320"/>
    </location>
</feature>
<feature type="modified residue" description="N6-succinyllysine; alternate" evidence="4">
    <location>
        <position position="320"/>
    </location>
</feature>
<feature type="sequence conflict" description="In Ref. 1; BAC37162." evidence="2" ref="1">
    <original>A</original>
    <variation>S</variation>
    <location>
        <position position="2"/>
    </location>
</feature>
<proteinExistence type="evidence at protein level"/>
<evidence type="ECO:0000250" key="1"/>
<evidence type="ECO:0000305" key="2"/>
<evidence type="ECO:0007744" key="3">
    <source>
    </source>
</evidence>
<evidence type="ECO:0007744" key="4">
    <source>
    </source>
</evidence>
<organism>
    <name type="scientific">Mus musculus</name>
    <name type="common">Mouse</name>
    <dbReference type="NCBI Taxonomy" id="10090"/>
    <lineage>
        <taxon>Eukaryota</taxon>
        <taxon>Metazoa</taxon>
        <taxon>Chordata</taxon>
        <taxon>Craniata</taxon>
        <taxon>Vertebrata</taxon>
        <taxon>Euteleostomi</taxon>
        <taxon>Mammalia</taxon>
        <taxon>Eutheria</taxon>
        <taxon>Euarchontoglires</taxon>
        <taxon>Glires</taxon>
        <taxon>Rodentia</taxon>
        <taxon>Myomorpha</taxon>
        <taxon>Muroidea</taxon>
        <taxon>Muridae</taxon>
        <taxon>Murinae</taxon>
        <taxon>Mus</taxon>
        <taxon>Mus</taxon>
    </lineage>
</organism>
<gene>
    <name type="primary">Hibadh</name>
</gene>
<reference key="1">
    <citation type="journal article" date="2005" name="Science">
        <title>The transcriptional landscape of the mammalian genome.</title>
        <authorList>
            <person name="Carninci P."/>
            <person name="Kasukawa T."/>
            <person name="Katayama S."/>
            <person name="Gough J."/>
            <person name="Frith M.C."/>
            <person name="Maeda N."/>
            <person name="Oyama R."/>
            <person name="Ravasi T."/>
            <person name="Lenhard B."/>
            <person name="Wells C."/>
            <person name="Kodzius R."/>
            <person name="Shimokawa K."/>
            <person name="Bajic V.B."/>
            <person name="Brenner S.E."/>
            <person name="Batalov S."/>
            <person name="Forrest A.R."/>
            <person name="Zavolan M."/>
            <person name="Davis M.J."/>
            <person name="Wilming L.G."/>
            <person name="Aidinis V."/>
            <person name="Allen J.E."/>
            <person name="Ambesi-Impiombato A."/>
            <person name="Apweiler R."/>
            <person name="Aturaliya R.N."/>
            <person name="Bailey T.L."/>
            <person name="Bansal M."/>
            <person name="Baxter L."/>
            <person name="Beisel K.W."/>
            <person name="Bersano T."/>
            <person name="Bono H."/>
            <person name="Chalk A.M."/>
            <person name="Chiu K.P."/>
            <person name="Choudhary V."/>
            <person name="Christoffels A."/>
            <person name="Clutterbuck D.R."/>
            <person name="Crowe M.L."/>
            <person name="Dalla E."/>
            <person name="Dalrymple B.P."/>
            <person name="de Bono B."/>
            <person name="Della Gatta G."/>
            <person name="di Bernardo D."/>
            <person name="Down T."/>
            <person name="Engstrom P."/>
            <person name="Fagiolini M."/>
            <person name="Faulkner G."/>
            <person name="Fletcher C.F."/>
            <person name="Fukushima T."/>
            <person name="Furuno M."/>
            <person name="Futaki S."/>
            <person name="Gariboldi M."/>
            <person name="Georgii-Hemming P."/>
            <person name="Gingeras T.R."/>
            <person name="Gojobori T."/>
            <person name="Green R.E."/>
            <person name="Gustincich S."/>
            <person name="Harbers M."/>
            <person name="Hayashi Y."/>
            <person name="Hensch T.K."/>
            <person name="Hirokawa N."/>
            <person name="Hill D."/>
            <person name="Huminiecki L."/>
            <person name="Iacono M."/>
            <person name="Ikeo K."/>
            <person name="Iwama A."/>
            <person name="Ishikawa T."/>
            <person name="Jakt M."/>
            <person name="Kanapin A."/>
            <person name="Katoh M."/>
            <person name="Kawasawa Y."/>
            <person name="Kelso J."/>
            <person name="Kitamura H."/>
            <person name="Kitano H."/>
            <person name="Kollias G."/>
            <person name="Krishnan S.P."/>
            <person name="Kruger A."/>
            <person name="Kummerfeld S.K."/>
            <person name="Kurochkin I.V."/>
            <person name="Lareau L.F."/>
            <person name="Lazarevic D."/>
            <person name="Lipovich L."/>
            <person name="Liu J."/>
            <person name="Liuni S."/>
            <person name="McWilliam S."/>
            <person name="Madan Babu M."/>
            <person name="Madera M."/>
            <person name="Marchionni L."/>
            <person name="Matsuda H."/>
            <person name="Matsuzawa S."/>
            <person name="Miki H."/>
            <person name="Mignone F."/>
            <person name="Miyake S."/>
            <person name="Morris K."/>
            <person name="Mottagui-Tabar S."/>
            <person name="Mulder N."/>
            <person name="Nakano N."/>
            <person name="Nakauchi H."/>
            <person name="Ng P."/>
            <person name="Nilsson R."/>
            <person name="Nishiguchi S."/>
            <person name="Nishikawa S."/>
            <person name="Nori F."/>
            <person name="Ohara O."/>
            <person name="Okazaki Y."/>
            <person name="Orlando V."/>
            <person name="Pang K.C."/>
            <person name="Pavan W.J."/>
            <person name="Pavesi G."/>
            <person name="Pesole G."/>
            <person name="Petrovsky N."/>
            <person name="Piazza S."/>
            <person name="Reed J."/>
            <person name="Reid J.F."/>
            <person name="Ring B.Z."/>
            <person name="Ringwald M."/>
            <person name="Rost B."/>
            <person name="Ruan Y."/>
            <person name="Salzberg S.L."/>
            <person name="Sandelin A."/>
            <person name="Schneider C."/>
            <person name="Schoenbach C."/>
            <person name="Sekiguchi K."/>
            <person name="Semple C.A."/>
            <person name="Seno S."/>
            <person name="Sessa L."/>
            <person name="Sheng Y."/>
            <person name="Shibata Y."/>
            <person name="Shimada H."/>
            <person name="Shimada K."/>
            <person name="Silva D."/>
            <person name="Sinclair B."/>
            <person name="Sperling S."/>
            <person name="Stupka E."/>
            <person name="Sugiura K."/>
            <person name="Sultana R."/>
            <person name="Takenaka Y."/>
            <person name="Taki K."/>
            <person name="Tammoja K."/>
            <person name="Tan S.L."/>
            <person name="Tang S."/>
            <person name="Taylor M.S."/>
            <person name="Tegner J."/>
            <person name="Teichmann S.A."/>
            <person name="Ueda H.R."/>
            <person name="van Nimwegen E."/>
            <person name="Verardo R."/>
            <person name="Wei C.L."/>
            <person name="Yagi K."/>
            <person name="Yamanishi H."/>
            <person name="Zabarovsky E."/>
            <person name="Zhu S."/>
            <person name="Zimmer A."/>
            <person name="Hide W."/>
            <person name="Bult C."/>
            <person name="Grimmond S.M."/>
            <person name="Teasdale R.D."/>
            <person name="Liu E.T."/>
            <person name="Brusic V."/>
            <person name="Quackenbush J."/>
            <person name="Wahlestedt C."/>
            <person name="Mattick J.S."/>
            <person name="Hume D.A."/>
            <person name="Kai C."/>
            <person name="Sasaki D."/>
            <person name="Tomaru Y."/>
            <person name="Fukuda S."/>
            <person name="Kanamori-Katayama M."/>
            <person name="Suzuki M."/>
            <person name="Aoki J."/>
            <person name="Arakawa T."/>
            <person name="Iida J."/>
            <person name="Imamura K."/>
            <person name="Itoh M."/>
            <person name="Kato T."/>
            <person name="Kawaji H."/>
            <person name="Kawagashira N."/>
            <person name="Kawashima T."/>
            <person name="Kojima M."/>
            <person name="Kondo S."/>
            <person name="Konno H."/>
            <person name="Nakano K."/>
            <person name="Ninomiya N."/>
            <person name="Nishio T."/>
            <person name="Okada M."/>
            <person name="Plessy C."/>
            <person name="Shibata K."/>
            <person name="Shiraki T."/>
            <person name="Suzuki S."/>
            <person name="Tagami M."/>
            <person name="Waki K."/>
            <person name="Watahiki A."/>
            <person name="Okamura-Oho Y."/>
            <person name="Suzuki H."/>
            <person name="Kawai J."/>
            <person name="Hayashizaki Y."/>
        </authorList>
    </citation>
    <scope>NUCLEOTIDE SEQUENCE [LARGE SCALE MRNA]</scope>
    <source>
        <strain>C57BL/6J</strain>
        <tissue>Olfactory bulb</tissue>
    </source>
</reference>
<reference key="2">
    <citation type="journal article" date="2004" name="Genome Res.">
        <title>The status, quality, and expansion of the NIH full-length cDNA project: the Mammalian Gene Collection (MGC).</title>
        <authorList>
            <consortium name="The MGC Project Team"/>
        </authorList>
    </citation>
    <scope>NUCLEOTIDE SEQUENCE [LARGE SCALE MRNA]</scope>
</reference>
<reference key="3">
    <citation type="journal article" date="2010" name="Cell">
        <title>A tissue-specific atlas of mouse protein phosphorylation and expression.</title>
        <authorList>
            <person name="Huttlin E.L."/>
            <person name="Jedrychowski M.P."/>
            <person name="Elias J.E."/>
            <person name="Goswami T."/>
            <person name="Rad R."/>
            <person name="Beausoleil S.A."/>
            <person name="Villen J."/>
            <person name="Haas W."/>
            <person name="Sowa M.E."/>
            <person name="Gygi S.P."/>
        </authorList>
    </citation>
    <scope>IDENTIFICATION BY MASS SPECTROMETRY [LARGE SCALE ANALYSIS]</scope>
    <source>
        <tissue>Brain</tissue>
        <tissue>Brown adipose tissue</tissue>
        <tissue>Heart</tissue>
        <tissue>Kidney</tissue>
        <tissue>Liver</tissue>
        <tissue>Lung</tissue>
        <tissue>Pancreas</tissue>
        <tissue>Spleen</tissue>
        <tissue>Testis</tissue>
    </source>
</reference>
<reference key="4">
    <citation type="journal article" date="2013" name="Mol. Cell">
        <title>SIRT5-mediated lysine desuccinylation impacts diverse metabolic pathways.</title>
        <authorList>
            <person name="Park J."/>
            <person name="Chen Y."/>
            <person name="Tishkoff D.X."/>
            <person name="Peng C."/>
            <person name="Tan M."/>
            <person name="Dai L."/>
            <person name="Xie Z."/>
            <person name="Zhang Y."/>
            <person name="Zwaans B.M."/>
            <person name="Skinner M.E."/>
            <person name="Lombard D.B."/>
            <person name="Zhao Y."/>
        </authorList>
    </citation>
    <scope>SUCCINYLATION [LARGE SCALE ANALYSIS] AT LYS-59; LYS-75; LYS-78; LYS-94; LYS-140; LYS-148; LYS-237; LYS-241; LYS-296 AND LYS-320</scope>
    <scope>IDENTIFICATION BY MASS SPECTROMETRY [LARGE SCALE ANALYSIS]</scope>
    <source>
        <tissue>Liver</tissue>
    </source>
</reference>
<reference key="5">
    <citation type="journal article" date="2013" name="Proc. Natl. Acad. Sci. U.S.A.">
        <title>Label-free quantitative proteomics of the lysine acetylome in mitochondria identifies substrates of SIRT3 in metabolic pathways.</title>
        <authorList>
            <person name="Rardin M.J."/>
            <person name="Newman J.C."/>
            <person name="Held J.M."/>
            <person name="Cusack M.P."/>
            <person name="Sorensen D.J."/>
            <person name="Li B."/>
            <person name="Schilling B."/>
            <person name="Mooney S.D."/>
            <person name="Kahn C.R."/>
            <person name="Verdin E."/>
            <person name="Gibson B.W."/>
        </authorList>
    </citation>
    <scope>ACETYLATION [LARGE SCALE ANALYSIS] AT LYS-59; LYS-75; LYS-78; LYS-120; LYS-144; LYS-148; LYS-237; LYS-241 AND LYS-320</scope>
    <scope>IDENTIFICATION BY MASS SPECTROMETRY [LARGE SCALE ANALYSIS]</scope>
    <source>
        <tissue>Liver</tissue>
    </source>
</reference>
<keyword id="KW-0007">Acetylation</keyword>
<keyword id="KW-0101">Branched-chain amino acid catabolism</keyword>
<keyword id="KW-0496">Mitochondrion</keyword>
<keyword id="KW-0520">NAD</keyword>
<keyword id="KW-0560">Oxidoreductase</keyword>
<keyword id="KW-1185">Reference proteome</keyword>
<keyword id="KW-0809">Transit peptide</keyword>
<protein>
    <recommendedName>
        <fullName>3-hydroxyisobutyrate dehydrogenase, mitochondrial</fullName>
        <shortName>HIBADH</shortName>
        <ecNumber>1.1.1.31</ecNumber>
    </recommendedName>
</protein>
<name>3HIDH_MOUSE</name>